<comment type="similarity">
    <text evidence="1">Belongs to the bacterial ribosomal protein bL36 family.</text>
</comment>
<proteinExistence type="inferred from homology"/>
<accession>B3CPU0</accession>
<gene>
    <name evidence="1" type="primary">rpmJ</name>
    <name type="ordered locus">WP0485</name>
</gene>
<reference key="1">
    <citation type="journal article" date="2008" name="Mol. Biol. Evol.">
        <title>Genome evolution of Wolbachia strain wPip from the Culex pipiens group.</title>
        <authorList>
            <person name="Klasson L."/>
            <person name="Walker T."/>
            <person name="Sebaihia M."/>
            <person name="Sanders M.J."/>
            <person name="Quail M.A."/>
            <person name="Lord A."/>
            <person name="Sanders S."/>
            <person name="Earl J."/>
            <person name="O'Neill S.L."/>
            <person name="Thomson N."/>
            <person name="Sinkins S.P."/>
            <person name="Parkhill J."/>
        </authorList>
    </citation>
    <scope>NUCLEOTIDE SEQUENCE [LARGE SCALE GENOMIC DNA]</scope>
    <source>
        <strain>wPip</strain>
    </source>
</reference>
<sequence>MKVKGSLKSHRNRDKNCKVVKRGGKVYIINKVKPRCKARQGS</sequence>
<keyword id="KW-0687">Ribonucleoprotein</keyword>
<keyword id="KW-0689">Ribosomal protein</keyword>
<protein>
    <recommendedName>
        <fullName evidence="1">Large ribosomal subunit protein bL36</fullName>
    </recommendedName>
    <alternativeName>
        <fullName evidence="2">50S ribosomal protein L36</fullName>
    </alternativeName>
</protein>
<name>RL36_WOLPP</name>
<feature type="chain" id="PRO_1000101082" description="Large ribosomal subunit protein bL36">
    <location>
        <begin position="1"/>
        <end position="42"/>
    </location>
</feature>
<evidence type="ECO:0000255" key="1">
    <source>
        <dbReference type="HAMAP-Rule" id="MF_00251"/>
    </source>
</evidence>
<evidence type="ECO:0000305" key="2"/>
<dbReference type="EMBL" id="AM999887">
    <property type="protein sequence ID" value="CAQ54593.1"/>
    <property type="molecule type" value="Genomic_DNA"/>
</dbReference>
<dbReference type="SMR" id="B3CPU0"/>
<dbReference type="KEGG" id="wpi:WP0485"/>
<dbReference type="eggNOG" id="COG0257">
    <property type="taxonomic scope" value="Bacteria"/>
</dbReference>
<dbReference type="HOGENOM" id="CLU_135723_3_2_5"/>
<dbReference type="Proteomes" id="UP000008814">
    <property type="component" value="Chromosome"/>
</dbReference>
<dbReference type="GO" id="GO:1990904">
    <property type="term" value="C:ribonucleoprotein complex"/>
    <property type="evidence" value="ECO:0007669"/>
    <property type="project" value="UniProtKB-KW"/>
</dbReference>
<dbReference type="GO" id="GO:0005840">
    <property type="term" value="C:ribosome"/>
    <property type="evidence" value="ECO:0007669"/>
    <property type="project" value="UniProtKB-KW"/>
</dbReference>
<dbReference type="GO" id="GO:0003735">
    <property type="term" value="F:structural constituent of ribosome"/>
    <property type="evidence" value="ECO:0007669"/>
    <property type="project" value="InterPro"/>
</dbReference>
<dbReference type="GO" id="GO:0006412">
    <property type="term" value="P:translation"/>
    <property type="evidence" value="ECO:0007669"/>
    <property type="project" value="UniProtKB-UniRule"/>
</dbReference>
<dbReference type="HAMAP" id="MF_00251">
    <property type="entry name" value="Ribosomal_bL36"/>
    <property type="match status" value="1"/>
</dbReference>
<dbReference type="InterPro" id="IPR000473">
    <property type="entry name" value="Ribosomal_bL36"/>
</dbReference>
<dbReference type="InterPro" id="IPR035977">
    <property type="entry name" value="Ribosomal_bL36_sp"/>
</dbReference>
<dbReference type="InterPro" id="IPR047621">
    <property type="entry name" value="Ribosomal_L36_bact"/>
</dbReference>
<dbReference type="NCBIfam" id="NF002021">
    <property type="entry name" value="PRK00831.1"/>
    <property type="match status" value="1"/>
</dbReference>
<dbReference type="NCBIfam" id="TIGR01022">
    <property type="entry name" value="rpmJ_bact"/>
    <property type="match status" value="1"/>
</dbReference>
<dbReference type="PANTHER" id="PTHR47781">
    <property type="entry name" value="50S RIBOSOMAL PROTEIN L36 2"/>
    <property type="match status" value="1"/>
</dbReference>
<dbReference type="PANTHER" id="PTHR47781:SF1">
    <property type="entry name" value="LARGE RIBOSOMAL SUBUNIT PROTEIN BL36B"/>
    <property type="match status" value="1"/>
</dbReference>
<dbReference type="Pfam" id="PF00444">
    <property type="entry name" value="Ribosomal_L36"/>
    <property type="match status" value="1"/>
</dbReference>
<dbReference type="SUPFAM" id="SSF57840">
    <property type="entry name" value="Ribosomal protein L36"/>
    <property type="match status" value="1"/>
</dbReference>
<organism>
    <name type="scientific">Wolbachia pipientis subsp. Culex pipiens (strain wPip)</name>
    <dbReference type="NCBI Taxonomy" id="570417"/>
    <lineage>
        <taxon>Bacteria</taxon>
        <taxon>Pseudomonadati</taxon>
        <taxon>Pseudomonadota</taxon>
        <taxon>Alphaproteobacteria</taxon>
        <taxon>Rickettsiales</taxon>
        <taxon>Anaplasmataceae</taxon>
        <taxon>Wolbachieae</taxon>
        <taxon>Wolbachia</taxon>
    </lineage>
</organism>